<reference key="1">
    <citation type="submission" date="1997-03" db="EMBL/GenBank/DDBJ databases">
        <authorList>
            <person name="Delorme C."/>
            <person name="Goupil-Feuillerat N."/>
            <person name="Godon J.-J."/>
            <person name="Ehrlich S.D."/>
            <person name="Renault P."/>
        </authorList>
    </citation>
    <scope>NUCLEOTIDE SEQUENCE [GENOMIC DNA]</scope>
    <source>
        <strain>NCDO 2118</strain>
    </source>
</reference>
<reference key="2">
    <citation type="journal article" date="2001" name="Genome Res.">
        <title>The complete genome sequence of the lactic acid bacterium Lactococcus lactis ssp. lactis IL1403.</title>
        <authorList>
            <person name="Bolotin A."/>
            <person name="Wincker P."/>
            <person name="Mauger S."/>
            <person name="Jaillon O."/>
            <person name="Malarme K."/>
            <person name="Weissenbach J."/>
            <person name="Ehrlich S.D."/>
            <person name="Sorokin A."/>
        </authorList>
    </citation>
    <scope>NUCLEOTIDE SEQUENCE [LARGE SCALE GENOMIC DNA]</scope>
    <source>
        <strain>IL1403</strain>
    </source>
</reference>
<accession>Q9CG88</accession>
<accession>O34131</accession>
<keyword id="KW-0560">Oxidoreductase</keyword>
<keyword id="KW-1185">Reference proteome</keyword>
<keyword id="KW-0819">tRNA processing</keyword>
<organism>
    <name type="scientific">Lactococcus lactis subsp. lactis (strain IL1403)</name>
    <name type="common">Streptococcus lactis</name>
    <dbReference type="NCBI Taxonomy" id="272623"/>
    <lineage>
        <taxon>Bacteria</taxon>
        <taxon>Bacillati</taxon>
        <taxon>Bacillota</taxon>
        <taxon>Bacilli</taxon>
        <taxon>Lactobacillales</taxon>
        <taxon>Streptococcaceae</taxon>
        <taxon>Lactococcus</taxon>
    </lineage>
</organism>
<dbReference type="EC" id="1.14.-.-" evidence="1"/>
<dbReference type="EMBL" id="U92974">
    <property type="protein sequence ID" value="AAB81912.1"/>
    <property type="molecule type" value="Genomic_DNA"/>
</dbReference>
<dbReference type="EMBL" id="AE005176">
    <property type="protein sequence ID" value="AAK05315.1"/>
    <property type="molecule type" value="Genomic_DNA"/>
</dbReference>
<dbReference type="PIR" id="A86777">
    <property type="entry name" value="A86777"/>
</dbReference>
<dbReference type="PIR" id="E47754">
    <property type="entry name" value="E47754"/>
</dbReference>
<dbReference type="RefSeq" id="NP_267373.1">
    <property type="nucleotide sequence ID" value="NC_002662.1"/>
</dbReference>
<dbReference type="RefSeq" id="WP_003131122.1">
    <property type="nucleotide sequence ID" value="NC_002662.1"/>
</dbReference>
<dbReference type="SMR" id="Q9CG88"/>
<dbReference type="PaxDb" id="272623-L38177"/>
<dbReference type="EnsemblBacteria" id="AAK05315">
    <property type="protein sequence ID" value="AAK05315"/>
    <property type="gene ID" value="L38177"/>
</dbReference>
<dbReference type="KEGG" id="lla:L38177"/>
<dbReference type="PATRIC" id="fig|272623.7.peg.1314"/>
<dbReference type="eggNOG" id="COG1054">
    <property type="taxonomic scope" value="Bacteria"/>
</dbReference>
<dbReference type="HOGENOM" id="CLU_038878_1_0_9"/>
<dbReference type="OrthoDB" id="9778326at2"/>
<dbReference type="Proteomes" id="UP000002196">
    <property type="component" value="Chromosome"/>
</dbReference>
<dbReference type="GO" id="GO:0016705">
    <property type="term" value="F:oxidoreductase activity, acting on paired donors, with incorporation or reduction of molecular oxygen"/>
    <property type="evidence" value="ECO:0007669"/>
    <property type="project" value="UniProtKB-UniRule"/>
</dbReference>
<dbReference type="GO" id="GO:0006400">
    <property type="term" value="P:tRNA modification"/>
    <property type="evidence" value="ECO:0007669"/>
    <property type="project" value="UniProtKB-UniRule"/>
</dbReference>
<dbReference type="CDD" id="cd01518">
    <property type="entry name" value="RHOD_YceA"/>
    <property type="match status" value="1"/>
</dbReference>
<dbReference type="Gene3D" id="3.30.70.100">
    <property type="match status" value="1"/>
</dbReference>
<dbReference type="Gene3D" id="3.40.250.10">
    <property type="entry name" value="Rhodanese-like domain"/>
    <property type="match status" value="1"/>
</dbReference>
<dbReference type="HAMAP" id="MF_00469">
    <property type="entry name" value="TrhO"/>
    <property type="match status" value="1"/>
</dbReference>
<dbReference type="InterPro" id="IPR001763">
    <property type="entry name" value="Rhodanese-like_dom"/>
</dbReference>
<dbReference type="InterPro" id="IPR036873">
    <property type="entry name" value="Rhodanese-like_dom_sf"/>
</dbReference>
<dbReference type="InterPro" id="IPR022111">
    <property type="entry name" value="Rhodanese_C"/>
</dbReference>
<dbReference type="InterPro" id="IPR020936">
    <property type="entry name" value="TrhO"/>
</dbReference>
<dbReference type="InterPro" id="IPR040503">
    <property type="entry name" value="TRHO_N"/>
</dbReference>
<dbReference type="NCBIfam" id="NF001135">
    <property type="entry name" value="PRK00142.1-3"/>
    <property type="match status" value="1"/>
</dbReference>
<dbReference type="PANTHER" id="PTHR43268:SF3">
    <property type="entry name" value="RHODANESE-LIKE DOMAIN-CONTAINING PROTEIN 7-RELATED"/>
    <property type="match status" value="1"/>
</dbReference>
<dbReference type="PANTHER" id="PTHR43268">
    <property type="entry name" value="THIOSULFATE SULFURTRANSFERASE/RHODANESE-LIKE DOMAIN-CONTAINING PROTEIN 2"/>
    <property type="match status" value="1"/>
</dbReference>
<dbReference type="Pfam" id="PF00581">
    <property type="entry name" value="Rhodanese"/>
    <property type="match status" value="1"/>
</dbReference>
<dbReference type="Pfam" id="PF12368">
    <property type="entry name" value="Rhodanese_C"/>
    <property type="match status" value="1"/>
</dbReference>
<dbReference type="Pfam" id="PF17773">
    <property type="entry name" value="UPF0176_N"/>
    <property type="match status" value="1"/>
</dbReference>
<dbReference type="SMART" id="SM00450">
    <property type="entry name" value="RHOD"/>
    <property type="match status" value="1"/>
</dbReference>
<dbReference type="SUPFAM" id="SSF52821">
    <property type="entry name" value="Rhodanese/Cell cycle control phosphatase"/>
    <property type="match status" value="1"/>
</dbReference>
<dbReference type="PROSITE" id="PS50206">
    <property type="entry name" value="RHODANESE_3"/>
    <property type="match status" value="1"/>
</dbReference>
<comment type="function">
    <text evidence="1">Catalyzes oxygen-dependent 5-hydroxyuridine (ho5U) modification at position 34 in tRNAs.</text>
</comment>
<comment type="catalytic activity">
    <reaction evidence="1">
        <text>uridine(34) in tRNA + AH2 + O2 = 5-hydroxyuridine(34) in tRNA + A + H2O</text>
        <dbReference type="Rhea" id="RHEA:64224"/>
        <dbReference type="Rhea" id="RHEA-COMP:11727"/>
        <dbReference type="Rhea" id="RHEA-COMP:13381"/>
        <dbReference type="ChEBI" id="CHEBI:13193"/>
        <dbReference type="ChEBI" id="CHEBI:15377"/>
        <dbReference type="ChEBI" id="CHEBI:15379"/>
        <dbReference type="ChEBI" id="CHEBI:17499"/>
        <dbReference type="ChEBI" id="CHEBI:65315"/>
        <dbReference type="ChEBI" id="CHEBI:136877"/>
    </reaction>
</comment>
<comment type="similarity">
    <text evidence="1">Belongs to the TrhO family.</text>
</comment>
<name>TRHO_LACLA</name>
<proteinExistence type="inferred from homology"/>
<protein>
    <recommendedName>
        <fullName evidence="1">tRNA uridine(34) hydroxylase</fullName>
        <ecNumber evidence="1">1.14.-.-</ecNumber>
    </recommendedName>
    <alternativeName>
        <fullName evidence="1">tRNA hydroxylation protein O</fullName>
    </alternativeName>
</protein>
<sequence>MTQDYRVLLYYQYVPIEDGETFAQKHLADCKELGLKGRILVADEGINGTVSGTIEQTNAYMELMKNDPRFSSTIFKIDEAEQNAFKKMHVRYRPELVNLSLEDDVNPLELTGAYLDPKEFREAMLDENTVVIDARNDYEFDLGHFRGAIRPEIRSFRELPQWIRDNKEQFMEKRVLTYCTGGIRCEKFSGWLVREGFKDVGQLHGGIATYGKDPEVQGDLWDGQMYVFDSRIAVPINQKEHVIVGRDWFDGSPCERYINCGNPECNRQMLASEENEAKYLGACSHECRVHPNNRYIKAHQLSNQEVQERLALLEKDLAS</sequence>
<gene>
    <name evidence="1" type="primary">trhO</name>
    <name type="synonym">ymdE</name>
    <name type="ordered locus">LL1217</name>
    <name type="ORF">L38177</name>
</gene>
<feature type="chain" id="PRO_0000161480" description="tRNA uridine(34) hydroxylase">
    <location>
        <begin position="1"/>
        <end position="319"/>
    </location>
</feature>
<feature type="domain" description="Rhodanese" evidence="1">
    <location>
        <begin position="125"/>
        <end position="219"/>
    </location>
</feature>
<feature type="active site" description="Cysteine persulfide intermediate" evidence="1">
    <location>
        <position position="179"/>
    </location>
</feature>
<feature type="sequence conflict" description="In Ref. 1; AAB81912." evidence="2" ref="1">
    <original>H</original>
    <variation>L</variation>
    <location>
        <position position="204"/>
    </location>
</feature>
<evidence type="ECO:0000255" key="1">
    <source>
        <dbReference type="HAMAP-Rule" id="MF_00469"/>
    </source>
</evidence>
<evidence type="ECO:0000305" key="2"/>